<keyword id="KW-0687">Ribonucleoprotein</keyword>
<keyword id="KW-0689">Ribosomal protein</keyword>
<comment type="similarity">
    <text evidence="1">Belongs to the bacterial ribosomal protein bL28 family.</text>
</comment>
<dbReference type="EMBL" id="CU468230">
    <property type="protein sequence ID" value="CAP02347.1"/>
    <property type="molecule type" value="Genomic_DNA"/>
</dbReference>
<dbReference type="SMR" id="B0VL79"/>
<dbReference type="KEGG" id="abm:ABSDF3063"/>
<dbReference type="HOGENOM" id="CLU_064548_3_1_6"/>
<dbReference type="Proteomes" id="UP000001741">
    <property type="component" value="Chromosome"/>
</dbReference>
<dbReference type="GO" id="GO:0022625">
    <property type="term" value="C:cytosolic large ribosomal subunit"/>
    <property type="evidence" value="ECO:0007669"/>
    <property type="project" value="TreeGrafter"/>
</dbReference>
<dbReference type="GO" id="GO:0003735">
    <property type="term" value="F:structural constituent of ribosome"/>
    <property type="evidence" value="ECO:0007669"/>
    <property type="project" value="InterPro"/>
</dbReference>
<dbReference type="GO" id="GO:0006412">
    <property type="term" value="P:translation"/>
    <property type="evidence" value="ECO:0007669"/>
    <property type="project" value="UniProtKB-UniRule"/>
</dbReference>
<dbReference type="FunFam" id="2.30.170.40:FF:000001">
    <property type="entry name" value="50S ribosomal protein L28"/>
    <property type="match status" value="1"/>
</dbReference>
<dbReference type="Gene3D" id="2.30.170.40">
    <property type="entry name" value="Ribosomal protein L28/L24"/>
    <property type="match status" value="1"/>
</dbReference>
<dbReference type="HAMAP" id="MF_00373">
    <property type="entry name" value="Ribosomal_bL28"/>
    <property type="match status" value="1"/>
</dbReference>
<dbReference type="InterPro" id="IPR026569">
    <property type="entry name" value="Ribosomal_bL28"/>
</dbReference>
<dbReference type="InterPro" id="IPR034704">
    <property type="entry name" value="Ribosomal_bL28/bL31-like_sf"/>
</dbReference>
<dbReference type="InterPro" id="IPR001383">
    <property type="entry name" value="Ribosomal_bL28_bact-type"/>
</dbReference>
<dbReference type="InterPro" id="IPR037147">
    <property type="entry name" value="Ribosomal_bL28_sf"/>
</dbReference>
<dbReference type="NCBIfam" id="TIGR00009">
    <property type="entry name" value="L28"/>
    <property type="match status" value="1"/>
</dbReference>
<dbReference type="PANTHER" id="PTHR13528">
    <property type="entry name" value="39S RIBOSOMAL PROTEIN L28, MITOCHONDRIAL"/>
    <property type="match status" value="1"/>
</dbReference>
<dbReference type="PANTHER" id="PTHR13528:SF2">
    <property type="entry name" value="LARGE RIBOSOMAL SUBUNIT PROTEIN BL28M"/>
    <property type="match status" value="1"/>
</dbReference>
<dbReference type="Pfam" id="PF00830">
    <property type="entry name" value="Ribosomal_L28"/>
    <property type="match status" value="1"/>
</dbReference>
<dbReference type="SUPFAM" id="SSF143800">
    <property type="entry name" value="L28p-like"/>
    <property type="match status" value="1"/>
</dbReference>
<proteinExistence type="inferred from homology"/>
<accession>B0VL79</accession>
<gene>
    <name evidence="1" type="primary">rpmB</name>
    <name type="ordered locus">ABSDF3063</name>
</gene>
<feature type="chain" id="PRO_1000121569" description="Large ribosomal subunit protein bL28">
    <location>
        <begin position="1"/>
        <end position="78"/>
    </location>
</feature>
<organism>
    <name type="scientific">Acinetobacter baumannii (strain SDF)</name>
    <dbReference type="NCBI Taxonomy" id="509170"/>
    <lineage>
        <taxon>Bacteria</taxon>
        <taxon>Pseudomonadati</taxon>
        <taxon>Pseudomonadota</taxon>
        <taxon>Gammaproteobacteria</taxon>
        <taxon>Moraxellales</taxon>
        <taxon>Moraxellaceae</taxon>
        <taxon>Acinetobacter</taxon>
        <taxon>Acinetobacter calcoaceticus/baumannii complex</taxon>
    </lineage>
</organism>
<sequence length="78" mass="9104">MSKVCQVTGKRPVVGNNVSHANNKTKRRFEPNLHHHRFWLESEKRFVRLRLTTKGMRIIDKLGIEKVVADLRAQGQKI</sequence>
<reference key="1">
    <citation type="journal article" date="2008" name="PLoS ONE">
        <title>Comparative analysis of Acinetobacters: three genomes for three lifestyles.</title>
        <authorList>
            <person name="Vallenet D."/>
            <person name="Nordmann P."/>
            <person name="Barbe V."/>
            <person name="Poirel L."/>
            <person name="Mangenot S."/>
            <person name="Bataille E."/>
            <person name="Dossat C."/>
            <person name="Gas S."/>
            <person name="Kreimeyer A."/>
            <person name="Lenoble P."/>
            <person name="Oztas S."/>
            <person name="Poulain J."/>
            <person name="Segurens B."/>
            <person name="Robert C."/>
            <person name="Abergel C."/>
            <person name="Claverie J.-M."/>
            <person name="Raoult D."/>
            <person name="Medigue C."/>
            <person name="Weissenbach J."/>
            <person name="Cruveiller S."/>
        </authorList>
    </citation>
    <scope>NUCLEOTIDE SEQUENCE [LARGE SCALE GENOMIC DNA]</scope>
    <source>
        <strain>SDF</strain>
    </source>
</reference>
<name>RL28_ACIBS</name>
<protein>
    <recommendedName>
        <fullName evidence="1">Large ribosomal subunit protein bL28</fullName>
    </recommendedName>
    <alternativeName>
        <fullName evidence="2">50S ribosomal protein L28</fullName>
    </alternativeName>
</protein>
<evidence type="ECO:0000255" key="1">
    <source>
        <dbReference type="HAMAP-Rule" id="MF_00373"/>
    </source>
</evidence>
<evidence type="ECO:0000305" key="2"/>